<proteinExistence type="evidence at protein level"/>
<evidence type="ECO:0000255" key="1">
    <source>
        <dbReference type="PROSITE-ProRule" id="PRU00238"/>
    </source>
</evidence>
<evidence type="ECO:0000269" key="2">
    <source>
    </source>
</evidence>
<evidence type="ECO:0007829" key="3">
    <source>
        <dbReference type="PDB" id="3G46"/>
    </source>
</evidence>
<sequence length="146" mass="15946">PSVYDAAAQLTADVKKDLRDSWKVIGSDKKGNGVALMTTLFADNQETIGYFKRLGDVSQGMANDKLRGHSITLMYALQNFIDQLDNPDDLVCVVEKFAVNHITRKISAAEFGKINGPIKKVLASKNFGDKYANAWAKLVAVVQAAL</sequence>
<keyword id="KW-0002">3D-structure</keyword>
<keyword id="KW-0963">Cytoplasm</keyword>
<keyword id="KW-0903">Direct protein sequencing</keyword>
<keyword id="KW-0349">Heme</keyword>
<keyword id="KW-0408">Iron</keyword>
<keyword id="KW-0479">Metal-binding</keyword>
<keyword id="KW-0561">Oxygen transport</keyword>
<keyword id="KW-0813">Transport</keyword>
<accession>P02213</accession>
<dbReference type="PIR" id="A02535">
    <property type="entry name" value="GGNKID"/>
</dbReference>
<dbReference type="PDB" id="1HBI">
    <property type="method" value="X-ray"/>
    <property type="resolution" value="1.70 A"/>
    <property type="chains" value="A/B=1-146"/>
</dbReference>
<dbReference type="PDB" id="1JWN">
    <property type="method" value="X-ray"/>
    <property type="resolution" value="2.10 A"/>
    <property type="chains" value="A/B/C/D=1-146"/>
</dbReference>
<dbReference type="PDB" id="1JZK">
    <property type="method" value="X-ray"/>
    <property type="resolution" value="2.20 A"/>
    <property type="chains" value="A/B/C/D=1-146"/>
</dbReference>
<dbReference type="PDB" id="1JZL">
    <property type="method" value="X-ray"/>
    <property type="resolution" value="1.50 A"/>
    <property type="chains" value="A/B=1-146"/>
</dbReference>
<dbReference type="PDB" id="1JZM">
    <property type="method" value="X-ray"/>
    <property type="resolution" value="1.90 A"/>
    <property type="chains" value="A/B=1-146"/>
</dbReference>
<dbReference type="PDB" id="1NWI">
    <property type="method" value="X-ray"/>
    <property type="resolution" value="2.50 A"/>
    <property type="chains" value="A/B/C/D=1-146"/>
</dbReference>
<dbReference type="PDB" id="1NWN">
    <property type="method" value="X-ray"/>
    <property type="resolution" value="2.80 A"/>
    <property type="chains" value="A/B=1-146"/>
</dbReference>
<dbReference type="PDB" id="1NXF">
    <property type="method" value="X-ray"/>
    <property type="resolution" value="1.85 A"/>
    <property type="chains" value="A/B=1-146"/>
</dbReference>
<dbReference type="PDB" id="2AUO">
    <property type="method" value="X-ray"/>
    <property type="resolution" value="1.53 A"/>
    <property type="chains" value="A/B=1-146"/>
</dbReference>
<dbReference type="PDB" id="2AUP">
    <property type="method" value="X-ray"/>
    <property type="resolution" value="1.80 A"/>
    <property type="chains" value="A/B=1-146"/>
</dbReference>
<dbReference type="PDB" id="2AUQ">
    <property type="method" value="X-ray"/>
    <property type="resolution" value="1.80 A"/>
    <property type="chains" value="A/B=1-146"/>
</dbReference>
<dbReference type="PDB" id="2AUR">
    <property type="method" value="X-ray"/>
    <property type="resolution" value="2.30 A"/>
    <property type="chains" value="A/B=1-146"/>
</dbReference>
<dbReference type="PDB" id="2AV0">
    <property type="method" value="X-ray"/>
    <property type="resolution" value="1.50 A"/>
    <property type="chains" value="A/B=1-146"/>
</dbReference>
<dbReference type="PDB" id="2AV3">
    <property type="method" value="X-ray"/>
    <property type="resolution" value="1.70 A"/>
    <property type="chains" value="A/B=1-146"/>
</dbReference>
<dbReference type="PDB" id="2GRF">
    <property type="method" value="X-ray"/>
    <property type="resolution" value="2.10 A"/>
    <property type="chains" value="A/B=1-146"/>
</dbReference>
<dbReference type="PDB" id="2GRH">
    <property type="method" value="X-ray"/>
    <property type="resolution" value="1.50 A"/>
    <property type="chains" value="A/B=1-146"/>
</dbReference>
<dbReference type="PDB" id="2GRZ">
    <property type="method" value="X-ray"/>
    <property type="resolution" value="1.60 A"/>
    <property type="chains" value="A/B=1-146"/>
</dbReference>
<dbReference type="PDB" id="2R4W">
    <property type="method" value="X-ray"/>
    <property type="resolution" value="1.80 A"/>
    <property type="chains" value="A/B=1-146"/>
</dbReference>
<dbReference type="PDB" id="2R4X">
    <property type="method" value="X-ray"/>
    <property type="resolution" value="2.10 A"/>
    <property type="chains" value="A/B=1-146"/>
</dbReference>
<dbReference type="PDB" id="2R4Y">
    <property type="method" value="X-ray"/>
    <property type="resolution" value="2.00 A"/>
    <property type="chains" value="A/B=1-146"/>
</dbReference>
<dbReference type="PDB" id="2R4Z">
    <property type="method" value="X-ray"/>
    <property type="resolution" value="1.60 A"/>
    <property type="chains" value="A/B=1-146"/>
</dbReference>
<dbReference type="PDB" id="2Z85">
    <property type="method" value="X-ray"/>
    <property type="resolution" value="1.60 A"/>
    <property type="chains" value="A/B=1-146"/>
</dbReference>
<dbReference type="PDB" id="2Z8A">
    <property type="method" value="X-ray"/>
    <property type="resolution" value="1.06 A"/>
    <property type="chains" value="A/B=1-146"/>
</dbReference>
<dbReference type="PDB" id="3G46">
    <property type="method" value="X-ray"/>
    <property type="resolution" value="0.91 A"/>
    <property type="chains" value="A/B=1-146"/>
</dbReference>
<dbReference type="PDB" id="3G4Q">
    <property type="method" value="X-ray"/>
    <property type="resolution" value="1.60 A"/>
    <property type="chains" value="A/B=1-146"/>
</dbReference>
<dbReference type="PDB" id="3G4R">
    <property type="method" value="X-ray"/>
    <property type="resolution" value="1.60 A"/>
    <property type="chains" value="A/B=1-146"/>
</dbReference>
<dbReference type="PDB" id="3G4U">
    <property type="method" value="X-ray"/>
    <property type="resolution" value="2.10 A"/>
    <property type="chains" value="A/B=1-146"/>
</dbReference>
<dbReference type="PDB" id="3G4V">
    <property type="method" value="X-ray"/>
    <property type="resolution" value="2.10 A"/>
    <property type="chains" value="A/B=1-146"/>
</dbReference>
<dbReference type="PDB" id="3G4W">
    <property type="method" value="X-ray"/>
    <property type="resolution" value="1.90 A"/>
    <property type="chains" value="A/B=1-146"/>
</dbReference>
<dbReference type="PDB" id="3G4Y">
    <property type="method" value="X-ray"/>
    <property type="resolution" value="1.70 A"/>
    <property type="chains" value="A/B=1-146"/>
</dbReference>
<dbReference type="PDB" id="3G52">
    <property type="method" value="X-ray"/>
    <property type="resolution" value="1.65 A"/>
    <property type="chains" value="A/B=1-146"/>
</dbReference>
<dbReference type="PDB" id="3G53">
    <property type="method" value="X-ray"/>
    <property type="resolution" value="1.64 A"/>
    <property type="chains" value="A/B=1-146"/>
</dbReference>
<dbReference type="PDB" id="3QOB">
    <property type="method" value="X-ray"/>
    <property type="resolution" value="1.60 A"/>
    <property type="chains" value="A/B=1-146"/>
</dbReference>
<dbReference type="PDB" id="3SDH">
    <property type="method" value="X-ray"/>
    <property type="resolution" value="1.40 A"/>
    <property type="chains" value="A/B=1-146"/>
</dbReference>
<dbReference type="PDB" id="3UGY">
    <property type="method" value="X-ray"/>
    <property type="resolution" value="2.10 A"/>
    <property type="chains" value="A/B=1-146"/>
</dbReference>
<dbReference type="PDB" id="3UGZ">
    <property type="method" value="X-ray"/>
    <property type="resolution" value="1.65 A"/>
    <property type="chains" value="A/B=1-146"/>
</dbReference>
<dbReference type="PDB" id="3UH3">
    <property type="method" value="X-ray"/>
    <property type="resolution" value="1.80 A"/>
    <property type="chains" value="A/B=1-146"/>
</dbReference>
<dbReference type="PDB" id="3UH5">
    <property type="method" value="X-ray"/>
    <property type="resolution" value="2.10 A"/>
    <property type="chains" value="A/B=1-146"/>
</dbReference>
<dbReference type="PDB" id="3UH6">
    <property type="method" value="X-ray"/>
    <property type="resolution" value="2.25 A"/>
    <property type="chains" value="A/B=1-146"/>
</dbReference>
<dbReference type="PDB" id="3UH7">
    <property type="method" value="X-ray"/>
    <property type="resolution" value="1.80 A"/>
    <property type="chains" value="A/B=1-146"/>
</dbReference>
<dbReference type="PDB" id="3UHB">
    <property type="method" value="X-ray"/>
    <property type="resolution" value="1.60 A"/>
    <property type="chains" value="A/B=1-146"/>
</dbReference>
<dbReference type="PDB" id="3UHC">
    <property type="method" value="X-ray"/>
    <property type="resolution" value="1.60 A"/>
    <property type="chains" value="A/B=1-146"/>
</dbReference>
<dbReference type="PDB" id="3UHD">
    <property type="method" value="X-ray"/>
    <property type="resolution" value="1.60 A"/>
    <property type="chains" value="A/B=1-146"/>
</dbReference>
<dbReference type="PDB" id="3UHE">
    <property type="method" value="X-ray"/>
    <property type="resolution" value="2.60 A"/>
    <property type="chains" value="A/B=1-146"/>
</dbReference>
<dbReference type="PDB" id="3UHG">
    <property type="method" value="X-ray"/>
    <property type="resolution" value="1.80 A"/>
    <property type="chains" value="A/B=1-146"/>
</dbReference>
<dbReference type="PDB" id="3UHH">
    <property type="method" value="X-ray"/>
    <property type="resolution" value="1.50 A"/>
    <property type="chains" value="A/B=1-146"/>
</dbReference>
<dbReference type="PDB" id="3UHI">
    <property type="method" value="X-ray"/>
    <property type="resolution" value="2.50 A"/>
    <property type="chains" value="A/B/C/D=1-146"/>
</dbReference>
<dbReference type="PDB" id="3UHK">
    <property type="method" value="X-ray"/>
    <property type="resolution" value="2.00 A"/>
    <property type="chains" value="A/B/C/D=1-146"/>
</dbReference>
<dbReference type="PDB" id="3UHN">
    <property type="method" value="X-ray"/>
    <property type="resolution" value="2.00 A"/>
    <property type="chains" value="A/B=1-146"/>
</dbReference>
<dbReference type="PDB" id="3UHQ">
    <property type="method" value="X-ray"/>
    <property type="resolution" value="1.95 A"/>
    <property type="chains" value="A/B=1-146"/>
</dbReference>
<dbReference type="PDB" id="3UHR">
    <property type="method" value="X-ray"/>
    <property type="resolution" value="1.90 A"/>
    <property type="chains" value="A/B=1-146"/>
</dbReference>
<dbReference type="PDB" id="3UHS">
    <property type="method" value="X-ray"/>
    <property type="resolution" value="2.10 A"/>
    <property type="chains" value="A/B=1-146"/>
</dbReference>
<dbReference type="PDB" id="3UHT">
    <property type="method" value="X-ray"/>
    <property type="resolution" value="2.00 A"/>
    <property type="chains" value="A/B=1-146"/>
</dbReference>
<dbReference type="PDB" id="3UHU">
    <property type="method" value="X-ray"/>
    <property type="resolution" value="2.10 A"/>
    <property type="chains" value="A/B=1-146"/>
</dbReference>
<dbReference type="PDB" id="3UHV">
    <property type="method" value="X-ray"/>
    <property type="resolution" value="1.75 A"/>
    <property type="chains" value="A/B=1-146"/>
</dbReference>
<dbReference type="PDB" id="3UHW">
    <property type="method" value="X-ray"/>
    <property type="resolution" value="2.05 A"/>
    <property type="chains" value="A/B=1-146"/>
</dbReference>
<dbReference type="PDB" id="3UHX">
    <property type="method" value="X-ray"/>
    <property type="resolution" value="1.70 A"/>
    <property type="chains" value="A/B=1-146"/>
</dbReference>
<dbReference type="PDB" id="3UHY">
    <property type="method" value="X-ray"/>
    <property type="resolution" value="2.20 A"/>
    <property type="chains" value="A/B=1-146"/>
</dbReference>
<dbReference type="PDB" id="3UHZ">
    <property type="method" value="X-ray"/>
    <property type="resolution" value="2.00 A"/>
    <property type="chains" value="A/B=1-146"/>
</dbReference>
<dbReference type="PDB" id="3UI0">
    <property type="method" value="X-ray"/>
    <property type="resolution" value="1.80 A"/>
    <property type="chains" value="A/B=1-146"/>
</dbReference>
<dbReference type="PDB" id="4HBI">
    <property type="method" value="X-ray"/>
    <property type="resolution" value="1.60 A"/>
    <property type="chains" value="A/B=1-146"/>
</dbReference>
<dbReference type="PDB" id="4SDH">
    <property type="method" value="X-ray"/>
    <property type="resolution" value="1.60 A"/>
    <property type="chains" value="A/B=1-146"/>
</dbReference>
<dbReference type="PDB" id="5HBI">
    <property type="method" value="X-ray"/>
    <property type="resolution" value="1.60 A"/>
    <property type="chains" value="A/B=1-146"/>
</dbReference>
<dbReference type="PDB" id="6HBI">
    <property type="method" value="X-ray"/>
    <property type="resolution" value="1.80 A"/>
    <property type="chains" value="A/B=1-146"/>
</dbReference>
<dbReference type="PDB" id="7HBI">
    <property type="method" value="X-ray"/>
    <property type="resolution" value="1.60 A"/>
    <property type="chains" value="A/B=1-146"/>
</dbReference>
<dbReference type="PDBsum" id="1HBI"/>
<dbReference type="PDBsum" id="1JWN"/>
<dbReference type="PDBsum" id="1JZK"/>
<dbReference type="PDBsum" id="1JZL"/>
<dbReference type="PDBsum" id="1JZM"/>
<dbReference type="PDBsum" id="1NWI"/>
<dbReference type="PDBsum" id="1NWN"/>
<dbReference type="PDBsum" id="1NXF"/>
<dbReference type="PDBsum" id="2AUO"/>
<dbReference type="PDBsum" id="2AUP"/>
<dbReference type="PDBsum" id="2AUQ"/>
<dbReference type="PDBsum" id="2AUR"/>
<dbReference type="PDBsum" id="2AV0"/>
<dbReference type="PDBsum" id="2AV3"/>
<dbReference type="PDBsum" id="2GRF"/>
<dbReference type="PDBsum" id="2GRH"/>
<dbReference type="PDBsum" id="2GRZ"/>
<dbReference type="PDBsum" id="2R4W"/>
<dbReference type="PDBsum" id="2R4X"/>
<dbReference type="PDBsum" id="2R4Y"/>
<dbReference type="PDBsum" id="2R4Z"/>
<dbReference type="PDBsum" id="2Z85"/>
<dbReference type="PDBsum" id="2Z8A"/>
<dbReference type="PDBsum" id="3G46"/>
<dbReference type="PDBsum" id="3G4Q"/>
<dbReference type="PDBsum" id="3G4R"/>
<dbReference type="PDBsum" id="3G4U"/>
<dbReference type="PDBsum" id="3G4V"/>
<dbReference type="PDBsum" id="3G4W"/>
<dbReference type="PDBsum" id="3G4Y"/>
<dbReference type="PDBsum" id="3G52"/>
<dbReference type="PDBsum" id="3G53"/>
<dbReference type="PDBsum" id="3QOB"/>
<dbReference type="PDBsum" id="3SDH"/>
<dbReference type="PDBsum" id="3UGY"/>
<dbReference type="PDBsum" id="3UGZ"/>
<dbReference type="PDBsum" id="3UH3"/>
<dbReference type="PDBsum" id="3UH5"/>
<dbReference type="PDBsum" id="3UH6"/>
<dbReference type="PDBsum" id="3UH7"/>
<dbReference type="PDBsum" id="3UHB"/>
<dbReference type="PDBsum" id="3UHC"/>
<dbReference type="PDBsum" id="3UHD"/>
<dbReference type="PDBsum" id="3UHE"/>
<dbReference type="PDBsum" id="3UHG"/>
<dbReference type="PDBsum" id="3UHH"/>
<dbReference type="PDBsum" id="3UHI"/>
<dbReference type="PDBsum" id="3UHK"/>
<dbReference type="PDBsum" id="3UHN"/>
<dbReference type="PDBsum" id="3UHQ"/>
<dbReference type="PDBsum" id="3UHR"/>
<dbReference type="PDBsum" id="3UHS"/>
<dbReference type="PDBsum" id="3UHT"/>
<dbReference type="PDBsum" id="3UHU"/>
<dbReference type="PDBsum" id="3UHV"/>
<dbReference type="PDBsum" id="3UHW"/>
<dbReference type="PDBsum" id="3UHX"/>
<dbReference type="PDBsum" id="3UHY"/>
<dbReference type="PDBsum" id="3UHZ"/>
<dbReference type="PDBsum" id="3UI0"/>
<dbReference type="PDBsum" id="4HBI"/>
<dbReference type="PDBsum" id="4SDH"/>
<dbReference type="PDBsum" id="5HBI"/>
<dbReference type="PDBsum" id="6HBI"/>
<dbReference type="PDBsum" id="7HBI"/>
<dbReference type="SMR" id="P02213"/>
<dbReference type="DIP" id="DIP-60313N"/>
<dbReference type="EvolutionaryTrace" id="P02213"/>
<dbReference type="GO" id="GO:0005737">
    <property type="term" value="C:cytoplasm"/>
    <property type="evidence" value="ECO:0007669"/>
    <property type="project" value="UniProtKB-SubCell"/>
</dbReference>
<dbReference type="GO" id="GO:0020037">
    <property type="term" value="F:heme binding"/>
    <property type="evidence" value="ECO:0007669"/>
    <property type="project" value="InterPro"/>
</dbReference>
<dbReference type="GO" id="GO:0042802">
    <property type="term" value="F:identical protein binding"/>
    <property type="evidence" value="ECO:0000353"/>
    <property type="project" value="IntAct"/>
</dbReference>
<dbReference type="GO" id="GO:0046872">
    <property type="term" value="F:metal ion binding"/>
    <property type="evidence" value="ECO:0007669"/>
    <property type="project" value="UniProtKB-KW"/>
</dbReference>
<dbReference type="GO" id="GO:0019825">
    <property type="term" value="F:oxygen binding"/>
    <property type="evidence" value="ECO:0007669"/>
    <property type="project" value="InterPro"/>
</dbReference>
<dbReference type="GO" id="GO:0005344">
    <property type="term" value="F:oxygen carrier activity"/>
    <property type="evidence" value="ECO:0007669"/>
    <property type="project" value="UniProtKB-KW"/>
</dbReference>
<dbReference type="CDD" id="cd01040">
    <property type="entry name" value="Mb-like"/>
    <property type="match status" value="1"/>
</dbReference>
<dbReference type="FunFam" id="1.10.490.10:FF:000039">
    <property type="entry name" value="Globin-1"/>
    <property type="match status" value="1"/>
</dbReference>
<dbReference type="Gene3D" id="1.10.490.10">
    <property type="entry name" value="Globins"/>
    <property type="match status" value="1"/>
</dbReference>
<dbReference type="InterPro" id="IPR000971">
    <property type="entry name" value="Globin"/>
</dbReference>
<dbReference type="InterPro" id="IPR050532">
    <property type="entry name" value="Globin-like_OT"/>
</dbReference>
<dbReference type="InterPro" id="IPR009050">
    <property type="entry name" value="Globin-like_sf"/>
</dbReference>
<dbReference type="InterPro" id="IPR012292">
    <property type="entry name" value="Globin/Proto"/>
</dbReference>
<dbReference type="InterPro" id="IPR044399">
    <property type="entry name" value="Mb-like_M"/>
</dbReference>
<dbReference type="PANTHER" id="PTHR46458">
    <property type="entry name" value="BLR2807 PROTEIN"/>
    <property type="match status" value="1"/>
</dbReference>
<dbReference type="PANTHER" id="PTHR46458:SF1">
    <property type="entry name" value="GEO09476P1"/>
    <property type="match status" value="1"/>
</dbReference>
<dbReference type="Pfam" id="PF00042">
    <property type="entry name" value="Globin"/>
    <property type="match status" value="1"/>
</dbReference>
<dbReference type="SUPFAM" id="SSF46458">
    <property type="entry name" value="Globin-like"/>
    <property type="match status" value="1"/>
</dbReference>
<dbReference type="PROSITE" id="PS01033">
    <property type="entry name" value="GLOBIN"/>
    <property type="match status" value="1"/>
</dbReference>
<organism>
    <name type="scientific">Anadara inaequivalvis</name>
    <name type="common">Inequivalve ark</name>
    <name type="synonym">Scapharca inaequivalvis</name>
    <dbReference type="NCBI Taxonomy" id="2784303"/>
    <lineage>
        <taxon>Eukaryota</taxon>
        <taxon>Metazoa</taxon>
        <taxon>Spiralia</taxon>
        <taxon>Lophotrochozoa</taxon>
        <taxon>Mollusca</taxon>
        <taxon>Bivalvia</taxon>
        <taxon>Autobranchia</taxon>
        <taxon>Pteriomorphia</taxon>
        <taxon>Arcoida</taxon>
        <taxon>Arcoidea</taxon>
        <taxon>Arcidae</taxon>
        <taxon>Anadara</taxon>
    </lineage>
</organism>
<name>GLB1_ANAIN</name>
<feature type="chain" id="PRO_0000052487" description="Globin-1">
    <location>
        <begin position="1"/>
        <end position="146"/>
    </location>
</feature>
<feature type="domain" description="Globin" evidence="1">
    <location>
        <begin position="9"/>
        <end position="146"/>
    </location>
</feature>
<feature type="binding site" description="proximal binding residue">
    <location>
        <position position="101"/>
    </location>
    <ligand>
        <name>heme b</name>
        <dbReference type="ChEBI" id="CHEBI:60344"/>
    </ligand>
    <ligandPart>
        <name>Fe</name>
        <dbReference type="ChEBI" id="CHEBI:18248"/>
    </ligandPart>
</feature>
<feature type="helix" evidence="3">
    <location>
        <begin position="3"/>
        <end position="8"/>
    </location>
</feature>
<feature type="helix" evidence="3">
    <location>
        <begin position="12"/>
        <end position="25"/>
    </location>
</feature>
<feature type="helix" evidence="3">
    <location>
        <begin position="26"/>
        <end position="28"/>
    </location>
</feature>
<feature type="helix" evidence="3">
    <location>
        <begin position="29"/>
        <end position="43"/>
    </location>
</feature>
<feature type="helix" evidence="3">
    <location>
        <begin position="45"/>
        <end position="54"/>
    </location>
</feature>
<feature type="helix" evidence="3">
    <location>
        <begin position="57"/>
        <end position="62"/>
    </location>
</feature>
<feature type="helix" evidence="3">
    <location>
        <begin position="64"/>
        <end position="82"/>
    </location>
</feature>
<feature type="turn" evidence="3">
    <location>
        <begin position="83"/>
        <end position="85"/>
    </location>
</feature>
<feature type="helix" evidence="3">
    <location>
        <begin position="87"/>
        <end position="103"/>
    </location>
</feature>
<feature type="helix" evidence="3">
    <location>
        <begin position="108"/>
        <end position="111"/>
    </location>
</feature>
<feature type="helix" evidence="3">
    <location>
        <begin position="112"/>
        <end position="114"/>
    </location>
</feature>
<feature type="helix" evidence="3">
    <location>
        <begin position="115"/>
        <end position="124"/>
    </location>
</feature>
<feature type="helix" evidence="3">
    <location>
        <begin position="129"/>
        <end position="145"/>
    </location>
</feature>
<reference key="1">
    <citation type="journal article" date="1985" name="FEBS Lett.">
        <title>Amino acid sequence of the cooperative homodimeric hemoglobin from the mollusc Scapharca inaequivalvis and topology of the intersubunit contacts.</title>
        <authorList>
            <person name="Petruzzelli R."/>
            <person name="Goffredo B.M."/>
            <person name="Barra D."/>
            <person name="Bossa F."/>
            <person name="Boffi A."/>
            <person name="Verzili D."/>
            <person name="Ascoli F."/>
            <person name="Chiancone E."/>
        </authorList>
    </citation>
    <scope>PROTEIN SEQUENCE</scope>
    <source>
        <tissue>Hemocyte</tissue>
    </source>
</reference>
<reference key="2">
    <citation type="journal article" date="1993" name="FEBS Lett.">
        <title>Cooperative homodimeric hemoglobin from Scapharca inaequivalvis. cDNA cloning and expression of the fully functional protein in E. coli.</title>
        <authorList>
            <person name="Gambacurta A."/>
            <person name="Piro M.C."/>
            <person name="Ascoli F."/>
        </authorList>
    </citation>
    <scope>SEQUENCE REVISION TO 56</scope>
</reference>
<reference key="3">
    <citation type="journal article" date="1985" name="Nature">
        <title>Cooperative dimeric and tetrameric clam haemoglobins are novel assemblages of myoglobin folds.</title>
        <authorList>
            <person name="Royer W.E. Jr."/>
            <person name="Love W.E."/>
            <person name="Fenderson F.F."/>
        </authorList>
    </citation>
    <scope>X-RAY CRYSTALLOGRAPHY (5.5 ANGSTROMS)</scope>
</reference>
<reference key="4">
    <citation type="journal article" date="1989" name="J. Biol. Chem.">
        <title>The 2.4-A crystal structure of Scapharca dimeric hemoglobin. Cooperativity based on directly communicating hemes at a novel subunit interface.</title>
        <authorList>
            <person name="Royer W.E. Jr."/>
            <person name="Hendrickson W.A."/>
            <person name="Chiancone E."/>
        </authorList>
    </citation>
    <scope>X-RAY CRYSTALLOGRAPHY (2.4 ANGSTROMS)</scope>
</reference>
<reference key="5">
    <citation type="journal article" date="1994" name="J. Mol. Biol.">
        <title>High-resolution crystallographic analysis of a co-operative dimeric hemoglobin.</title>
        <authorList>
            <person name="Royer W.E. Jr."/>
        </authorList>
    </citation>
    <scope>X-RAY CRYSTALLOGRAPHY (1.4 ANGSTROMS)</scope>
</reference>
<reference key="6">
    <citation type="journal article" date="1997" name="J. Biol. Chem.">
        <title>Mutation of residue Phe97 to Leu disrupts the central allosteric pathway in Scapharca dimeric hemoglobin.</title>
        <authorList>
            <person name="Pardanani A."/>
            <person name="Gibson Q.H."/>
            <person name="Colotti G."/>
            <person name="Royer W.E. Jr."/>
        </authorList>
    </citation>
    <scope>X-RAY CRYSTALLOGRAPHY (1.7 ANGSTROMS) OF MUTANT LEU-97</scope>
</reference>
<reference key="7">
    <citation type="journal article" date="1998" name="J. Mol. Biol.">
        <title>Mutational destabilization of the critical interface water cluster in scapharca dimeric hemoglobin: structural basis for altered allosteric activity.</title>
        <authorList>
            <person name="Pardanani A."/>
            <person name="Gambacurta A."/>
            <person name="Ascoli F."/>
            <person name="Royer W.E. Jr."/>
        </authorList>
    </citation>
    <scope>X-RAY CRYSTALLOGRAPHY (1.6 ANGSTROMS) IN COMPLEX WITH HEME</scope>
    <scope>SUBUNIT</scope>
</reference>
<protein>
    <recommendedName>
        <fullName>Globin-1</fullName>
    </recommendedName>
    <alternativeName>
        <fullName>Dimeric hemoglobin</fullName>
    </alternativeName>
    <alternativeName>
        <fullName>Globin I</fullName>
    </alternativeName>
    <alternativeName>
        <fullName>HbI</fullName>
    </alternativeName>
</protein>
<comment type="subunit">
    <text evidence="2">Homodimer.</text>
</comment>
<comment type="interaction">
    <interactant intactId="EBI-15582090">
        <id>P02213</id>
    </interactant>
    <interactant intactId="EBI-15582090">
        <id>P02213</id>
        <label>-</label>
    </interactant>
    <organismsDiffer>false</organismsDiffer>
    <experiments>2</experiments>
</comment>
<comment type="subcellular location">
    <subcellularLocation>
        <location>Cytoplasm</location>
    </subcellularLocation>
</comment>
<comment type="similarity">
    <text evidence="1">Belongs to the globin family.</text>
</comment>